<dbReference type="EMBL" id="AF115768">
    <property type="protein sequence ID" value="AAD22963.1"/>
    <property type="molecule type" value="mRNA"/>
</dbReference>
<dbReference type="SMR" id="P82106"/>
<dbReference type="FunCoup" id="P82106">
    <property type="interactions" value="1"/>
</dbReference>
<dbReference type="STRING" id="10116.ENSRNOP00000018529"/>
<dbReference type="PaxDb" id="10116-ENSRNOP00000018529"/>
<dbReference type="UCSC" id="RGD:1304852">
    <property type="organism name" value="rat"/>
</dbReference>
<dbReference type="AGR" id="RGD:1304852"/>
<dbReference type="InParanoid" id="P82106"/>
<dbReference type="PhylomeDB" id="P82106"/>
<dbReference type="Proteomes" id="UP000002494">
    <property type="component" value="Unplaced"/>
</dbReference>
<dbReference type="GO" id="GO:0005615">
    <property type="term" value="C:extracellular space"/>
    <property type="evidence" value="ECO:0000318"/>
    <property type="project" value="GO_Central"/>
</dbReference>
<dbReference type="GO" id="GO:0019731">
    <property type="term" value="P:antibacterial humoral response"/>
    <property type="evidence" value="ECO:0000318"/>
    <property type="project" value="GO_Central"/>
</dbReference>
<dbReference type="GO" id="GO:0061844">
    <property type="term" value="P:antimicrobial humoral immune response mediated by antimicrobial peptide"/>
    <property type="evidence" value="ECO:0000318"/>
    <property type="project" value="GO_Central"/>
</dbReference>
<dbReference type="GO" id="GO:0071222">
    <property type="term" value="P:cellular response to lipopolysaccharide"/>
    <property type="evidence" value="ECO:0000318"/>
    <property type="project" value="GO_Central"/>
</dbReference>
<dbReference type="GO" id="GO:0050829">
    <property type="term" value="P:defense response to Gram-negative bacterium"/>
    <property type="evidence" value="ECO:0000318"/>
    <property type="project" value="GO_Central"/>
</dbReference>
<dbReference type="GO" id="GO:0050830">
    <property type="term" value="P:defense response to Gram-positive bacterium"/>
    <property type="evidence" value="ECO:0000318"/>
    <property type="project" value="GO_Central"/>
</dbReference>
<dbReference type="GO" id="GO:0051673">
    <property type="term" value="P:disruption of plasma membrane integrity in another organism"/>
    <property type="evidence" value="ECO:0000318"/>
    <property type="project" value="GO_Central"/>
</dbReference>
<dbReference type="GO" id="GO:0002227">
    <property type="term" value="P:innate immune response in mucosa"/>
    <property type="evidence" value="ECO:0000318"/>
    <property type="project" value="GO_Central"/>
</dbReference>
<dbReference type="InterPro" id="IPR016327">
    <property type="entry name" value="Alpha-defensin"/>
</dbReference>
<dbReference type="InterPro" id="IPR006081">
    <property type="entry name" value="Alpha-defensin_C"/>
</dbReference>
<dbReference type="InterPro" id="IPR002366">
    <property type="entry name" value="Alpha-defensin_N"/>
</dbReference>
<dbReference type="PANTHER" id="PTHR11876">
    <property type="entry name" value="ALPHA-DEFENSIN 1"/>
    <property type="match status" value="1"/>
</dbReference>
<dbReference type="PANTHER" id="PTHR11876:SF2">
    <property type="entry name" value="ALPHA-DEFENSIN 1-RELATED"/>
    <property type="match status" value="1"/>
</dbReference>
<dbReference type="Pfam" id="PF00879">
    <property type="entry name" value="Defensin_propep"/>
    <property type="match status" value="1"/>
</dbReference>
<dbReference type="PIRSF" id="PIRSF001875">
    <property type="entry name" value="Alpha-defensin"/>
    <property type="match status" value="1"/>
</dbReference>
<dbReference type="SMART" id="SM01418">
    <property type="entry name" value="Defensin_propep"/>
    <property type="match status" value="1"/>
</dbReference>
<dbReference type="PROSITE" id="PS00269">
    <property type="entry name" value="DEFENSIN"/>
    <property type="match status" value="1"/>
</dbReference>
<proteinExistence type="evidence at transcript level"/>
<evidence type="ECO:0000250" key="1"/>
<evidence type="ECO:0000255" key="2"/>
<evidence type="ECO:0000269" key="3">
    <source>
    </source>
</evidence>
<evidence type="ECO:0000305" key="4"/>
<feature type="signal peptide" evidence="2">
    <location>
        <begin position="1"/>
        <end position="19"/>
    </location>
</feature>
<feature type="propeptide" id="PRO_0000006869" evidence="2">
    <location>
        <begin position="20"/>
        <end position="58"/>
    </location>
</feature>
<feature type="peptide" id="PRO_0000006870" description="Defensin 5">
    <location>
        <begin position="59"/>
        <end position="93"/>
    </location>
</feature>
<feature type="disulfide bond" evidence="1">
    <location>
        <begin position="64"/>
        <end position="92"/>
    </location>
</feature>
<feature type="disulfide bond" evidence="1">
    <location>
        <begin position="66"/>
        <end position="81"/>
    </location>
</feature>
<feature type="disulfide bond" evidence="1">
    <location>
        <begin position="71"/>
        <end position="91"/>
    </location>
</feature>
<comment type="function">
    <text>Probably contributes to the antimicrobial barrier function of the small intestine.</text>
</comment>
<comment type="subcellular location">
    <subcellularLocation>
        <location>Secreted</location>
    </subcellularLocation>
</comment>
<comment type="tissue specificity">
    <text evidence="3">Small intestine. Not present in heart, liver, spleen, kidney, large intestine and colon.</text>
</comment>
<comment type="induction">
    <text>By hemorrhagic shock.</text>
</comment>
<comment type="similarity">
    <text evidence="4">Belongs to the alpha-defensin family.</text>
</comment>
<keyword id="KW-0044">Antibiotic</keyword>
<keyword id="KW-0929">Antimicrobial</keyword>
<keyword id="KW-0211">Defensin</keyword>
<keyword id="KW-1015">Disulfide bond</keyword>
<keyword id="KW-1185">Reference proteome</keyword>
<keyword id="KW-0964">Secreted</keyword>
<keyword id="KW-0732">Signal</keyword>
<reference key="1">
    <citation type="journal article" date="1999" name="Infect. Immun.">
        <title>Induction of a rat enteric defensin gene by hemorrhagic shock.</title>
        <authorList>
            <person name="Condon M.R."/>
            <person name="Viera A."/>
            <person name="D'Alessio M."/>
            <person name="Diamond G."/>
        </authorList>
    </citation>
    <scope>NUCLEOTIDE SEQUENCE [MRNA]</scope>
    <scope>TISSUE SPECIFICITY</scope>
    <source>
        <strain>Sprague-Dawley</strain>
        <tissue>Small intestine</tissue>
    </source>
</reference>
<name>DEF5_RAT</name>
<sequence length="93" mass="10242">MKKLVLLSALVLLALQVEAEPTPKTDEGTKTDEQPGKEDQVVSVSIEGQGDPAFQDAVLRDLKCFCRRKSCNWGEGIMGICKKRYGSPILCCR</sequence>
<organism>
    <name type="scientific">Rattus norvegicus</name>
    <name type="common">Rat</name>
    <dbReference type="NCBI Taxonomy" id="10116"/>
    <lineage>
        <taxon>Eukaryota</taxon>
        <taxon>Metazoa</taxon>
        <taxon>Chordata</taxon>
        <taxon>Craniata</taxon>
        <taxon>Vertebrata</taxon>
        <taxon>Euteleostomi</taxon>
        <taxon>Mammalia</taxon>
        <taxon>Eutheria</taxon>
        <taxon>Euarchontoglires</taxon>
        <taxon>Glires</taxon>
        <taxon>Rodentia</taxon>
        <taxon>Myomorpha</taxon>
        <taxon>Muroidea</taxon>
        <taxon>Muridae</taxon>
        <taxon>Murinae</taxon>
        <taxon>Rattus</taxon>
    </lineage>
</organism>
<accession>P82106</accession>
<protein>
    <recommendedName>
        <fullName>Defensin 5</fullName>
    </recommendedName>
    <alternativeName>
        <fullName>Enteric defensin</fullName>
    </alternativeName>
    <alternativeName>
        <fullName>RD-5</fullName>
    </alternativeName>
</protein>